<proteinExistence type="inferred from homology"/>
<gene>
    <name evidence="1" type="primary">eIF3a</name>
    <name evidence="1" type="synonym">eIF3-S10</name>
    <name type="ORF">GL22350</name>
</gene>
<accession>B4GDX4</accession>
<evidence type="ECO:0000255" key="1">
    <source>
        <dbReference type="HAMAP-Rule" id="MF_03000"/>
    </source>
</evidence>
<evidence type="ECO:0000255" key="2">
    <source>
        <dbReference type="PROSITE-ProRule" id="PRU01185"/>
    </source>
</evidence>
<evidence type="ECO:0000256" key="3">
    <source>
        <dbReference type="SAM" id="MobiDB-lite"/>
    </source>
</evidence>
<evidence type="ECO:0000305" key="4"/>
<protein>
    <recommendedName>
        <fullName evidence="1">Eukaryotic translation initiation factor 3 subunit A</fullName>
        <shortName evidence="1">eIF3a</shortName>
    </recommendedName>
    <alternativeName>
        <fullName evidence="1">Eukaryotic translation initiation factor 3 subunit 10</fullName>
    </alternativeName>
</protein>
<keyword id="KW-0963">Cytoplasm</keyword>
<keyword id="KW-0396">Initiation factor</keyword>
<keyword id="KW-0648">Protein biosynthesis</keyword>
<keyword id="KW-1185">Reference proteome</keyword>
<keyword id="KW-0694">RNA-binding</keyword>
<comment type="function">
    <text evidence="1">RNA-binding component of the eukaryotic translation initiation factor 3 (eIF-3) complex, which is involved in protein synthesis of a specialized repertoire of mRNAs and, together with other initiation factors, stimulates binding of mRNA and methionyl-tRNAi to the 40S ribosome. The eIF-3 complex specifically targets and initiates translation of a subset of mRNAs involved in cell proliferation.</text>
</comment>
<comment type="subunit">
    <text evidence="1">Component of the eukaryotic translation initiation factor 3 (eIF-3) complex. The eIF-3 complex interacts with pix.</text>
</comment>
<comment type="subcellular location">
    <subcellularLocation>
        <location evidence="1">Cytoplasm</location>
    </subcellularLocation>
</comment>
<comment type="similarity">
    <text evidence="1">Belongs to the eIF-3 subunit A family.</text>
</comment>
<comment type="sequence caution" evidence="4">
    <conflict type="erroneous gene model prediction">
        <sequence resource="EMBL-CDS" id="EDW34635"/>
    </conflict>
</comment>
<comment type="sequence caution" evidence="4">
    <conflict type="erroneous termination">
        <sequence resource="EMBL-CDS" id="EDW34635"/>
    </conflict>
    <text>Truncated C-terminus.</text>
</comment>
<name>EIF3A_DROPE</name>
<organism>
    <name type="scientific">Drosophila persimilis</name>
    <name type="common">Fruit fly</name>
    <dbReference type="NCBI Taxonomy" id="7234"/>
    <lineage>
        <taxon>Eukaryota</taxon>
        <taxon>Metazoa</taxon>
        <taxon>Ecdysozoa</taxon>
        <taxon>Arthropoda</taxon>
        <taxon>Hexapoda</taxon>
        <taxon>Insecta</taxon>
        <taxon>Pterygota</taxon>
        <taxon>Neoptera</taxon>
        <taxon>Endopterygota</taxon>
        <taxon>Diptera</taxon>
        <taxon>Brachycera</taxon>
        <taxon>Muscomorpha</taxon>
        <taxon>Ephydroidea</taxon>
        <taxon>Drosophilidae</taxon>
        <taxon>Drosophila</taxon>
        <taxon>Sophophora</taxon>
    </lineage>
</organism>
<dbReference type="EMBL" id="CH479182">
    <property type="protein sequence ID" value="EDW34635.1"/>
    <property type="status" value="ALT_SEQ"/>
    <property type="molecule type" value="Genomic_DNA"/>
</dbReference>
<dbReference type="RefSeq" id="XP_002017535.1">
    <property type="nucleotide sequence ID" value="XM_002017499.1"/>
</dbReference>
<dbReference type="SMR" id="B4GDX4"/>
<dbReference type="STRING" id="7234.B4GDX4"/>
<dbReference type="eggNOG" id="KOG2072">
    <property type="taxonomic scope" value="Eukaryota"/>
</dbReference>
<dbReference type="OrthoDB" id="18884at2759"/>
<dbReference type="ChiTaRS" id="eIF3-S10">
    <property type="organism name" value="fly"/>
</dbReference>
<dbReference type="Proteomes" id="UP000008744">
    <property type="component" value="Unassembled WGS sequence"/>
</dbReference>
<dbReference type="GO" id="GO:0016282">
    <property type="term" value="C:eukaryotic 43S preinitiation complex"/>
    <property type="evidence" value="ECO:0007669"/>
    <property type="project" value="UniProtKB-UniRule"/>
</dbReference>
<dbReference type="GO" id="GO:0033290">
    <property type="term" value="C:eukaryotic 48S preinitiation complex"/>
    <property type="evidence" value="ECO:0007669"/>
    <property type="project" value="UniProtKB-UniRule"/>
</dbReference>
<dbReference type="GO" id="GO:0005852">
    <property type="term" value="C:eukaryotic translation initiation factor 3 complex"/>
    <property type="evidence" value="ECO:0000250"/>
    <property type="project" value="UniProtKB"/>
</dbReference>
<dbReference type="GO" id="GO:0071540">
    <property type="term" value="C:eukaryotic translation initiation factor 3 complex, eIF3e"/>
    <property type="evidence" value="ECO:0007669"/>
    <property type="project" value="TreeGrafter"/>
</dbReference>
<dbReference type="GO" id="GO:0071541">
    <property type="term" value="C:eukaryotic translation initiation factor 3 complex, eIF3m"/>
    <property type="evidence" value="ECO:0007669"/>
    <property type="project" value="TreeGrafter"/>
</dbReference>
<dbReference type="GO" id="GO:0043614">
    <property type="term" value="C:multi-eIF complex"/>
    <property type="evidence" value="ECO:0007669"/>
    <property type="project" value="TreeGrafter"/>
</dbReference>
<dbReference type="GO" id="GO:0003729">
    <property type="term" value="F:mRNA binding"/>
    <property type="evidence" value="ECO:0007669"/>
    <property type="project" value="TreeGrafter"/>
</dbReference>
<dbReference type="GO" id="GO:0003743">
    <property type="term" value="F:translation initiation factor activity"/>
    <property type="evidence" value="ECO:0000250"/>
    <property type="project" value="UniProtKB"/>
</dbReference>
<dbReference type="GO" id="GO:0001732">
    <property type="term" value="P:formation of cytoplasmic translation initiation complex"/>
    <property type="evidence" value="ECO:0007669"/>
    <property type="project" value="UniProtKB-UniRule"/>
</dbReference>
<dbReference type="GO" id="GO:0006446">
    <property type="term" value="P:regulation of translational initiation"/>
    <property type="evidence" value="ECO:0000250"/>
    <property type="project" value="UniProtKB"/>
</dbReference>
<dbReference type="GO" id="GO:0002188">
    <property type="term" value="P:translation reinitiation"/>
    <property type="evidence" value="ECO:0007669"/>
    <property type="project" value="TreeGrafter"/>
</dbReference>
<dbReference type="FunFam" id="1.25.40.860:FF:000007">
    <property type="entry name" value="Eukaryotic translation initiation factor 3 subunit A"/>
    <property type="match status" value="1"/>
</dbReference>
<dbReference type="FunFam" id="4.10.860.10:FF:000001">
    <property type="entry name" value="Eukaryotic translation initiation factor 3 subunit A"/>
    <property type="match status" value="1"/>
</dbReference>
<dbReference type="Gene3D" id="1.25.40.860">
    <property type="match status" value="2"/>
</dbReference>
<dbReference type="Gene3D" id="4.10.860.10">
    <property type="entry name" value="UVR domain"/>
    <property type="match status" value="1"/>
</dbReference>
<dbReference type="HAMAP" id="MF_03000">
    <property type="entry name" value="eIF3a"/>
    <property type="match status" value="1"/>
</dbReference>
<dbReference type="InterPro" id="IPR027512">
    <property type="entry name" value="EIF3A"/>
</dbReference>
<dbReference type="InterPro" id="IPR054711">
    <property type="entry name" value="eIF3a_PCI_TPR-like"/>
</dbReference>
<dbReference type="InterPro" id="IPR000717">
    <property type="entry name" value="PCI_dom"/>
</dbReference>
<dbReference type="PANTHER" id="PTHR14005:SF0">
    <property type="entry name" value="EUKARYOTIC TRANSLATION INITIATION FACTOR 3 SUBUNIT A"/>
    <property type="match status" value="1"/>
</dbReference>
<dbReference type="PANTHER" id="PTHR14005">
    <property type="entry name" value="EUKARYOTIC TRANSLATION INITIATION FACTOR 3, THETA SUBUNIT"/>
    <property type="match status" value="1"/>
</dbReference>
<dbReference type="Pfam" id="PF22591">
    <property type="entry name" value="eIF3a_PCI_TPR-like"/>
    <property type="match status" value="1"/>
</dbReference>
<dbReference type="Pfam" id="PF01399">
    <property type="entry name" value="PCI"/>
    <property type="match status" value="1"/>
</dbReference>
<dbReference type="SMART" id="SM00088">
    <property type="entry name" value="PINT"/>
    <property type="match status" value="1"/>
</dbReference>
<dbReference type="PROSITE" id="PS50250">
    <property type="entry name" value="PCI"/>
    <property type="match status" value="1"/>
</dbReference>
<feature type="chain" id="PRO_0000366339" description="Eukaryotic translation initiation factor 3 subunit A">
    <location>
        <begin position="1"/>
        <end position="1173"/>
    </location>
</feature>
<feature type="domain" description="PCI" evidence="2">
    <location>
        <begin position="319"/>
        <end position="502"/>
    </location>
</feature>
<feature type="region of interest" description="Disordered" evidence="3">
    <location>
        <begin position="589"/>
        <end position="613"/>
    </location>
</feature>
<feature type="region of interest" description="Disordered" evidence="3">
    <location>
        <begin position="836"/>
        <end position="1173"/>
    </location>
</feature>
<feature type="compositionally biased region" description="Basic and acidic residues" evidence="3">
    <location>
        <begin position="836"/>
        <end position="900"/>
    </location>
</feature>
<feature type="compositionally biased region" description="Basic and acidic residues" evidence="3">
    <location>
        <begin position="925"/>
        <end position="1011"/>
    </location>
</feature>
<feature type="compositionally biased region" description="Basic and acidic residues" evidence="3">
    <location>
        <begin position="1028"/>
        <end position="1081"/>
    </location>
</feature>
<feature type="compositionally biased region" description="Basic and acidic residues" evidence="3">
    <location>
        <begin position="1090"/>
        <end position="1125"/>
    </location>
</feature>
<feature type="compositionally biased region" description="Gly residues" evidence="3">
    <location>
        <begin position="1128"/>
        <end position="1142"/>
    </location>
</feature>
<feature type="compositionally biased region" description="Basic and acidic residues" evidence="3">
    <location>
        <begin position="1149"/>
        <end position="1165"/>
    </location>
</feature>
<reference key="1">
    <citation type="journal article" date="2007" name="Nature">
        <title>Evolution of genes and genomes on the Drosophila phylogeny.</title>
        <authorList>
            <consortium name="Drosophila 12 genomes consortium"/>
        </authorList>
    </citation>
    <scope>NUCLEOTIDE SEQUENCE [LARGE SCALE GENOMIC DNA]</scope>
    <source>
        <strain>MSH-3 / Tucson 14011-0111.49</strain>
    </source>
</reference>
<sequence length="1173" mass="136774">MARYTQRPENALKRANEFIEVGKPLRALDTLQEVFRNKRWNYAYSETVIEPLMFKYLYLCVELKKSHIAKEGLFQYRNMFQLVNVNSLENVIRGYLKMAEEHTEAAQAQSSAAVAVLELDDLDNIATPESILMSAVCGEDAQDRSDRTILLPWVKFLWESYCQCLELLRVNTHCEALYHDIARMAFQFCLKYNRKSEFRRLCDKLRKHLEDICKSSNQTTGVSINKVETQQLCLDTRLYLLDSAIQMELWQEAYKAIEDIHGLMALSKKTPVPKTMANYYQKLAMVFSKAGNQLFHAAALLKLFQLTRELKKNLTKDDLQRMAAHVLLATLSIPLPSAHPEFDRFIEADKSPLEKAQKLAVLLGLPQPPTRVSLIREVVRLNVPQLVSEDFRNLYNWLEVDFNPLNLCKRIQSIVDIIETGPTETNLLSPYIQSLKDVTIMRLIRQISQVYESIEFKRLLELATFCNIFELEKLLVESVRHNDMQIRIDHQKNSIYFGTDLTESQREYRPDGPALQSMPSEQIRSQLVNMSTVLTRAVSIVYPNRERDQRAKLRTQMVHHYHEIKDREHQRILQRQKIIEDRKEYIEKQNNAREEEEARRQEEESRKAKLAEQKRLELEQEERERKRHQNEIQAIKEKSLKEKVQQISQTAHGKKMLSKLDEEGIKKLDAEQIAKRESEELQRERKELQSKLKSQEKKIDYYERAKRLEEIPLFEKYLAEKQVKDKEFWEATEKTRIENAIAERKDAVSQQERLKRMYPDRDEFLEALKKERASLYVEKLKKFEIALEAERKKRLADRVIRRREERRQAFLREKEEERLRKEEEIRLAQAAEERAAAEARRLEREAEDEKRRAQYEKQRAKEEEAERKIKEDRDRLAREVAVERERSDKERDTWRPRGGDRPSAAAAGGGGGAGEWRRAAAPIGDRNERAGDRIERGGERMERGGDRMERGGDRMERGGERTERGGDRMDRGGERMDRGGERGERGADRDRERRDNEGADSSWRVRREPDSQRGAGVKDASGSAAPPSRDDKWRRGGDRDRDRDRDFRNDGPRRDRDDRDDRDRGGFRRNDGPRRNDDAAPRETGGNWRDAPRQSDRDNRRPAGDRRDREVRGGDLRGPESRAPKEGGPSGGTGTAAGGGGNWRTAPGPRDEPAPKRDQPQDKGKFSLTPVQL</sequence>